<dbReference type="EMBL" id="M65106">
    <property type="protein sequence ID" value="AAA26002.1"/>
    <property type="molecule type" value="Genomic_DNA"/>
</dbReference>
<dbReference type="EMBL" id="AY552601">
    <property type="protein sequence ID" value="AAS66663.1"/>
    <property type="molecule type" value="Genomic_DNA"/>
</dbReference>
<dbReference type="PDB" id="1G10">
    <property type="method" value="NMR"/>
    <property type="chains" value="A=2-103"/>
</dbReference>
<dbReference type="PDB" id="1G11">
    <property type="method" value="NMR"/>
    <property type="chains" value="A=2-103"/>
</dbReference>
<dbReference type="PDB" id="2BF2">
    <property type="method" value="X-ray"/>
    <property type="resolution" value="2.10 A"/>
    <property type="chains" value="A/B=2-103"/>
</dbReference>
<dbReference type="PDB" id="2BF3">
    <property type="method" value="X-ray"/>
    <property type="resolution" value="1.96 A"/>
    <property type="chains" value="A/B=12-103"/>
</dbReference>
<dbReference type="PDB" id="2BF5">
    <property type="method" value="X-ray"/>
    <property type="resolution" value="1.71 A"/>
    <property type="chains" value="A/B=6-103"/>
</dbReference>
<dbReference type="PDB" id="3DHH">
    <property type="method" value="X-ray"/>
    <property type="resolution" value="1.94 A"/>
    <property type="chains" value="E=1-103"/>
</dbReference>
<dbReference type="PDB" id="3DHI">
    <property type="method" value="X-ray"/>
    <property type="resolution" value="1.68 A"/>
    <property type="chains" value="E=1-103"/>
</dbReference>
<dbReference type="PDB" id="3GE3">
    <property type="method" value="X-ray"/>
    <property type="resolution" value="1.52 A"/>
    <property type="chains" value="E=1-103"/>
</dbReference>
<dbReference type="PDB" id="3GE8">
    <property type="method" value="X-ray"/>
    <property type="resolution" value="2.19 A"/>
    <property type="chains" value="E/H=1-103"/>
</dbReference>
<dbReference type="PDB" id="3I5J">
    <property type="method" value="X-ray"/>
    <property type="resolution" value="1.90 A"/>
    <property type="chains" value="E=1-103"/>
</dbReference>
<dbReference type="PDB" id="3I63">
    <property type="method" value="X-ray"/>
    <property type="resolution" value="2.09 A"/>
    <property type="chains" value="E=1-103"/>
</dbReference>
<dbReference type="PDB" id="3Q14">
    <property type="method" value="X-ray"/>
    <property type="resolution" value="1.75 A"/>
    <property type="chains" value="E=1-103"/>
</dbReference>
<dbReference type="PDB" id="3Q2A">
    <property type="method" value="X-ray"/>
    <property type="resolution" value="1.99 A"/>
    <property type="chains" value="E=1-103"/>
</dbReference>
<dbReference type="PDB" id="3Q3M">
    <property type="method" value="X-ray"/>
    <property type="resolution" value="1.75 A"/>
    <property type="chains" value="E/H=1-103"/>
</dbReference>
<dbReference type="PDB" id="3Q3N">
    <property type="method" value="X-ray"/>
    <property type="resolution" value="1.84 A"/>
    <property type="chains" value="E=1-103"/>
</dbReference>
<dbReference type="PDB" id="3Q3O">
    <property type="method" value="X-ray"/>
    <property type="resolution" value="1.95 A"/>
    <property type="chains" value="E=1-103"/>
</dbReference>
<dbReference type="PDB" id="3RI7">
    <property type="method" value="X-ray"/>
    <property type="resolution" value="2.10 A"/>
    <property type="chains" value="E=3-103"/>
</dbReference>
<dbReference type="PDB" id="5TDT">
    <property type="method" value="X-ray"/>
    <property type="resolution" value="1.82 A"/>
    <property type="chains" value="E/H=1-103"/>
</dbReference>
<dbReference type="PDB" id="5TDU">
    <property type="method" value="X-ray"/>
    <property type="resolution" value="1.74 A"/>
    <property type="chains" value="E=1-103"/>
</dbReference>
<dbReference type="PDB" id="5TDV">
    <property type="method" value="X-ray"/>
    <property type="resolution" value="2.00 A"/>
    <property type="chains" value="E/H=1-103"/>
</dbReference>
<dbReference type="PDBsum" id="1G10"/>
<dbReference type="PDBsum" id="1G11"/>
<dbReference type="PDBsum" id="2BF2"/>
<dbReference type="PDBsum" id="2BF3"/>
<dbReference type="PDBsum" id="2BF5"/>
<dbReference type="PDBsum" id="3DHH"/>
<dbReference type="PDBsum" id="3DHI"/>
<dbReference type="PDBsum" id="3GE3"/>
<dbReference type="PDBsum" id="3GE8"/>
<dbReference type="PDBsum" id="3I5J"/>
<dbReference type="PDBsum" id="3I63"/>
<dbReference type="PDBsum" id="3Q14"/>
<dbReference type="PDBsum" id="3Q2A"/>
<dbReference type="PDBsum" id="3Q3M"/>
<dbReference type="PDBsum" id="3Q3N"/>
<dbReference type="PDBsum" id="3Q3O"/>
<dbReference type="PDBsum" id="3RI7"/>
<dbReference type="PDBsum" id="5TDT"/>
<dbReference type="PDBsum" id="5TDU"/>
<dbReference type="PDBsum" id="5TDV"/>
<dbReference type="BMRB" id="Q00459"/>
<dbReference type="SMR" id="Q00459"/>
<dbReference type="DIP" id="DIP-48646N"/>
<dbReference type="IntAct" id="Q00459">
    <property type="interactions" value="1"/>
</dbReference>
<dbReference type="KEGG" id="ag:AAA26002"/>
<dbReference type="BioCyc" id="MetaCyc:MONOMER-2504"/>
<dbReference type="BRENDA" id="1.14.13.236">
    <property type="organism ID" value="31258"/>
</dbReference>
<dbReference type="UniPathway" id="UPA00273"/>
<dbReference type="EvolutionaryTrace" id="Q00459"/>
<dbReference type="GO" id="GO:0004497">
    <property type="term" value="F:monooxygenase activity"/>
    <property type="evidence" value="ECO:0007669"/>
    <property type="project" value="InterPro"/>
</dbReference>
<dbReference type="GO" id="GO:0042203">
    <property type="term" value="P:toluene catabolic process"/>
    <property type="evidence" value="ECO:0007669"/>
    <property type="project" value="UniProtKB-UniPathway"/>
</dbReference>
<dbReference type="Gene3D" id="3.90.56.10">
    <property type="entry name" value="Monooxygenase component MmoB/DmpM"/>
    <property type="match status" value="1"/>
</dbReference>
<dbReference type="InterPro" id="IPR003454">
    <property type="entry name" value="MOase_MmoB_DmpM"/>
</dbReference>
<dbReference type="InterPro" id="IPR036889">
    <property type="entry name" value="mOase_MmoB_DmpM_sf"/>
</dbReference>
<dbReference type="Pfam" id="PF02406">
    <property type="entry name" value="MmoB_DmpM"/>
    <property type="match status" value="1"/>
</dbReference>
<dbReference type="SUPFAM" id="SSF56029">
    <property type="entry name" value="Monooxygenase (hydroxylase) regulatory protein"/>
    <property type="match status" value="1"/>
</dbReference>
<reference key="1">
    <citation type="journal article" date="1991" name="J. Bacteriol.">
        <title>Cloning and characterization of a Pseudomonas mendocina KR1 gene cluster encoding toluene-4-monooxygenase.</title>
        <authorList>
            <person name="Yen K.-M."/>
            <person name="Karl M.R."/>
            <person name="Blatt L.M."/>
            <person name="Simon M.J."/>
            <person name="Winter R.B."/>
            <person name="Fausset P.R."/>
            <person name="Lu H.S."/>
            <person name="Harcourt A.A."/>
            <person name="Chen K.K."/>
        </authorList>
    </citation>
    <scope>NUCLEOTIDE SEQUENCE [GENOMIC DNA]</scope>
    <scope>PROTEIN SEQUENCE OF 2-22</scope>
    <scope>FUNCTION</scope>
    <scope>DISRUPTION PHENOTYPE</scope>
    <source>
        <strain>KR1</strain>
    </source>
</reference>
<reference key="2">
    <citation type="journal article" date="2004" name="Appl. Environ. Microbiol.">
        <title>Oxidation of benzene to phenol, catechol, and 1,2,3-trihydroxybenzene by toluene 4-monooxygenase of Pseudomonas mendocina KR1 and toluene 3-monooxygenase of Ralstonia pickettii PKO1.</title>
        <authorList>
            <person name="Tao Y."/>
            <person name="Fishman A."/>
            <person name="Bentley W.E."/>
            <person name="Wood T.K."/>
        </authorList>
    </citation>
    <scope>NUCLEOTIDE SEQUENCE [GENOMIC DNA]</scope>
    <scope>FUNCTION</scope>
    <scope>PATHWAY</scope>
    <source>
        <strain evidence="14">KR1</strain>
    </source>
</reference>
<reference key="3">
    <citation type="journal article" date="2001" name="Biochemistry">
        <title>Solution structure of the toluene 4-monooxygenase effector protein (T4moD).</title>
        <authorList>
            <person name="Hemmi H."/>
            <person name="Studts J.M."/>
            <person name="Chae Y.K."/>
            <person name="Song J."/>
            <person name="Markley J.L."/>
            <person name="Fox B.G."/>
        </authorList>
    </citation>
    <scope>STRUCTURE BY NMR</scope>
    <scope>FUNCTION</scope>
</reference>
<reference key="4">
    <citation type="journal article" date="2005" name="Biochemistry">
        <title>Crystal structures and functional studies of T4moD, the toluene 4-monooxygenase catalytic effector protein.</title>
        <authorList>
            <person name="Lountos G.T."/>
            <person name="Mitchell K.H."/>
            <person name="Studts J.M."/>
            <person name="Fox B.G."/>
            <person name="Orville A.M."/>
        </authorList>
    </citation>
    <scope>X-RAY CRYSTALLOGRAPHY (1.96 ANGSTROMS)</scope>
    <scope>FUNCTION</scope>
</reference>
<reference key="5">
    <citation type="journal article" date="2008" name="Proc. Natl. Acad. Sci. U.S.A.">
        <title>Structural consequences of effector protein complex formation in a diiron hydroxylase.</title>
        <authorList>
            <person name="Bailey L.J."/>
            <person name="McCoy J.G."/>
            <person name="Phillips G.N. Jr."/>
            <person name="Fox B.G."/>
        </authorList>
    </citation>
    <scope>X-RAY CRYSTALLOGRAPHY (1.68 ANGSTROMS)</scope>
    <scope>FUNCTION</scope>
    <scope>SUBUNIT</scope>
</reference>
<reference key="6">
    <citation type="journal article" date="2009" name="Biochemistry">
        <title>Role for threonine 201 in the catalytic cycle of the soluble diiron hydroxylase toluene 4-monooxygenase.</title>
        <authorList>
            <person name="Elsen N.L."/>
            <person name="Bailey L.J."/>
            <person name="Hauser A.D."/>
            <person name="Fox B.G."/>
        </authorList>
    </citation>
    <scope>X-RAY CRYSTALLOGRAPHY (1.52 ANGSTROMS)</scope>
    <scope>SUBUNIT</scope>
</reference>
<reference key="7">
    <citation type="journal article" date="2009" name="Biochemistry">
        <title>Crystallographic and catalytic studies of the peroxide-shunt reaction in a diiron hydroxylase.</title>
        <authorList>
            <person name="Bailey L.J."/>
            <person name="Fox B.G."/>
        </authorList>
    </citation>
    <scope>X-RAY CRYSTALLOGRAPHY (1.90 ANGSTROMS)</scope>
    <scope>SUBUNIT</scope>
</reference>
<reference key="8">
    <citation type="journal article" date="2012" name="Biochemistry">
        <title>Crystallographic analysis of active site contributions to regiospecificity in the diiron enzyme toluene 4-monooxygenase.</title>
        <authorList>
            <person name="Bailey L.J."/>
            <person name="Acheson J.F."/>
            <person name="McCoy J.G."/>
            <person name="Elsen N.L."/>
            <person name="Phillips G.N. Jr."/>
            <person name="Fox B.G."/>
        </authorList>
    </citation>
    <scope>X-RAY CRYSTALLOGRAPHY (1.75 ANGSTROMS)</scope>
    <scope>SUBUNIT</scope>
    <source>
        <strain>KR1</strain>
    </source>
</reference>
<reference key="9">
    <citation type="journal article" date="2017" name="Nature">
        <title>In-crystal reaction cycle of a toluene-bound diiron hydroxylase.</title>
        <authorList>
            <person name="Acheson J.F."/>
            <person name="Bailey L.J."/>
            <person name="Brunold T.C."/>
            <person name="Fox B.G."/>
        </authorList>
    </citation>
    <scope>X-RAY CRYSTALLOGRAPHY (1.74 ANGSTROMS)</scope>
    <scope>SUBUNIT</scope>
</reference>
<keyword id="KW-0002">3D-structure</keyword>
<keyword id="KW-0058">Aromatic hydrocarbons catabolism</keyword>
<keyword id="KW-0903">Direct protein sequencing</keyword>
<comment type="function">
    <text evidence="1 2 3 4 5">Effector component of the toluene-4-monooxygenase multicomponent enzyme system which catalyzes the O2- and NADH-dependent hydroxylation of toluene to form p-cresol (PubMed:11297417, PubMed:15240250, PubMed:15882052, PubMed:1885512, PubMed:19033467). Required for optimal efficiency and specificity of the holoenzyme (PubMed:15882052, PubMed:19033467).</text>
</comment>
<comment type="pathway">
    <text evidence="13">Xenobiotic degradation; toluene degradation.</text>
</comment>
<comment type="subunit">
    <text evidence="5 6 7 8 9">The alkene monooxygenase multicomponent enzyme system is composed of an electron transfer component and a monooxygenase component interacting with the effector protein TmoD. The electron transfer component is composed of a ferredoxin reductase (TmoF) and a ferredoxin (TmoC), and the monooxygenase component is formed by a heterohexamer (dimer of heterotrimers) of two alpha subunits (TmoA), two beta subunits (TmoE) and two gamma subunits (TmoB).</text>
</comment>
<comment type="disruption phenotype">
    <text evidence="4">Cells lacking this gene show a complete loss of toluene-4-monooxygenase activity.</text>
</comment>
<comment type="similarity">
    <text evidence="12">Belongs to the TmoD/XamoD family.</text>
</comment>
<proteinExistence type="evidence at protein level"/>
<accession>Q00459</accession>
<accession>Q6Q8Q4</accession>
<protein>
    <recommendedName>
        <fullName evidence="10">Toluene-4-monooxygenase system, effector component</fullName>
        <shortName evidence="11">T4MO</shortName>
    </recommendedName>
    <alternativeName>
        <fullName>Toluene-4-monooxygenase effector protein</fullName>
    </alternativeName>
    <alternativeName>
        <fullName evidence="11">Toluene-4-monooxygenase system protein D</fullName>
        <shortName evidence="11">T4moD</shortName>
    </alternativeName>
</protein>
<sequence length="103" mass="11618">MSTLADQALHNNNVGPIIRAGDLVEPVIETAEIDNPGKEITVEDRRAYVRIAAEGELILTRKTLEEQLGRPFNMQELEINLASFAGQIQADEDQIRFYFDKTM</sequence>
<feature type="initiator methionine" description="Removed" evidence="4">
    <location>
        <position position="1"/>
    </location>
</feature>
<feature type="chain" id="PRO_0000072602" description="Toluene-4-monooxygenase system, effector component">
    <location>
        <begin position="2"/>
        <end position="103"/>
    </location>
</feature>
<feature type="helix" evidence="16">
    <location>
        <begin position="3"/>
        <end position="9"/>
    </location>
</feature>
<feature type="strand" evidence="16">
    <location>
        <begin position="13"/>
        <end position="21"/>
    </location>
</feature>
<feature type="helix" evidence="16">
    <location>
        <begin position="24"/>
        <end position="34"/>
    </location>
</feature>
<feature type="strand" evidence="16">
    <location>
        <begin position="41"/>
        <end position="44"/>
    </location>
</feature>
<feature type="strand" evidence="16">
    <location>
        <begin position="46"/>
        <end position="60"/>
    </location>
</feature>
<feature type="helix" evidence="16">
    <location>
        <begin position="61"/>
        <end position="68"/>
    </location>
</feature>
<feature type="strand" evidence="15">
    <location>
        <begin position="70"/>
        <end position="72"/>
    </location>
</feature>
<feature type="helix" evidence="16">
    <location>
        <begin position="74"/>
        <end position="79"/>
    </location>
</feature>
<feature type="strand" evidence="16">
    <location>
        <begin position="81"/>
        <end position="90"/>
    </location>
</feature>
<feature type="strand" evidence="16">
    <location>
        <begin position="92"/>
        <end position="98"/>
    </location>
</feature>
<gene>
    <name evidence="11" type="primary">tmoD</name>
</gene>
<organism>
    <name type="scientific">Ectopseudomonas mendocina</name>
    <name type="common">Pseudomonas mendocina</name>
    <dbReference type="NCBI Taxonomy" id="300"/>
    <lineage>
        <taxon>Bacteria</taxon>
        <taxon>Pseudomonadati</taxon>
        <taxon>Pseudomonadota</taxon>
        <taxon>Gammaproteobacteria</taxon>
        <taxon>Pseudomonadales</taxon>
        <taxon>Pseudomonadaceae</taxon>
        <taxon>Ectopseudomonas</taxon>
    </lineage>
</organism>
<evidence type="ECO:0000269" key="1">
    <source>
    </source>
</evidence>
<evidence type="ECO:0000269" key="2">
    <source>
    </source>
</evidence>
<evidence type="ECO:0000269" key="3">
    <source>
    </source>
</evidence>
<evidence type="ECO:0000269" key="4">
    <source>
    </source>
</evidence>
<evidence type="ECO:0000269" key="5">
    <source>
    </source>
</evidence>
<evidence type="ECO:0000269" key="6">
    <source>
    </source>
</evidence>
<evidence type="ECO:0000269" key="7">
    <source>
    </source>
</evidence>
<evidence type="ECO:0000269" key="8">
    <source>
    </source>
</evidence>
<evidence type="ECO:0000269" key="9">
    <source>
    </source>
</evidence>
<evidence type="ECO:0000303" key="10">
    <source>
    </source>
</evidence>
<evidence type="ECO:0000303" key="11">
    <source>
    </source>
</evidence>
<evidence type="ECO:0000305" key="12"/>
<evidence type="ECO:0000305" key="13">
    <source>
    </source>
</evidence>
<evidence type="ECO:0000312" key="14">
    <source>
        <dbReference type="EMBL" id="AAS66663.1"/>
    </source>
</evidence>
<evidence type="ECO:0007829" key="15">
    <source>
        <dbReference type="PDB" id="1G11"/>
    </source>
</evidence>
<evidence type="ECO:0007829" key="16">
    <source>
        <dbReference type="PDB" id="3GE3"/>
    </source>
</evidence>
<name>TMOD_ECTME</name>